<accession>A5I7L8</accession>
<accession>A7G8V0</accession>
<keyword id="KW-0488">Methylation</keyword>
<keyword id="KW-1185">Reference proteome</keyword>
<keyword id="KW-0687">Ribonucleoprotein</keyword>
<keyword id="KW-0689">Ribosomal protein</keyword>
<keyword id="KW-0694">RNA-binding</keyword>
<keyword id="KW-0699">rRNA-binding</keyword>
<reference key="1">
    <citation type="journal article" date="2007" name="Genome Res.">
        <title>Genome sequence of a proteolytic (Group I) Clostridium botulinum strain Hall A and comparative analysis of the clostridial genomes.</title>
        <authorList>
            <person name="Sebaihia M."/>
            <person name="Peck M.W."/>
            <person name="Minton N.P."/>
            <person name="Thomson N.R."/>
            <person name="Holden M.T.G."/>
            <person name="Mitchell W.J."/>
            <person name="Carter A.T."/>
            <person name="Bentley S.D."/>
            <person name="Mason D.R."/>
            <person name="Crossman L."/>
            <person name="Paul C.J."/>
            <person name="Ivens A."/>
            <person name="Wells-Bennik M.H.J."/>
            <person name="Davis I.J."/>
            <person name="Cerdeno-Tarraga A.M."/>
            <person name="Churcher C."/>
            <person name="Quail M.A."/>
            <person name="Chillingworth T."/>
            <person name="Feltwell T."/>
            <person name="Fraser A."/>
            <person name="Goodhead I."/>
            <person name="Hance Z."/>
            <person name="Jagels K."/>
            <person name="Larke N."/>
            <person name="Maddison M."/>
            <person name="Moule S."/>
            <person name="Mungall K."/>
            <person name="Norbertczak H."/>
            <person name="Rabbinowitsch E."/>
            <person name="Sanders M."/>
            <person name="Simmonds M."/>
            <person name="White B."/>
            <person name="Whithead S."/>
            <person name="Parkhill J."/>
        </authorList>
    </citation>
    <scope>NUCLEOTIDE SEQUENCE [LARGE SCALE GENOMIC DNA]</scope>
    <source>
        <strain>Hall / ATCC 3502 / NCTC 13319 / Type A</strain>
    </source>
</reference>
<reference key="2">
    <citation type="journal article" date="2007" name="PLoS ONE">
        <title>Analysis of the neurotoxin complex genes in Clostridium botulinum A1-A4 and B1 strains: BoNT/A3, /Ba4 and /B1 clusters are located within plasmids.</title>
        <authorList>
            <person name="Smith T.J."/>
            <person name="Hill K.K."/>
            <person name="Foley B.T."/>
            <person name="Detter J.C."/>
            <person name="Munk A.C."/>
            <person name="Bruce D.C."/>
            <person name="Doggett N.A."/>
            <person name="Smith L.A."/>
            <person name="Marks J.D."/>
            <person name="Xie G."/>
            <person name="Brettin T.S."/>
        </authorList>
    </citation>
    <scope>NUCLEOTIDE SEQUENCE [LARGE SCALE GENOMIC DNA]</scope>
    <source>
        <strain>Hall / ATCC 3502 / NCTC 13319 / Type A</strain>
    </source>
</reference>
<organism>
    <name type="scientific">Clostridium botulinum (strain Hall / ATCC 3502 / NCTC 13319 / Type A)</name>
    <dbReference type="NCBI Taxonomy" id="441771"/>
    <lineage>
        <taxon>Bacteria</taxon>
        <taxon>Bacillati</taxon>
        <taxon>Bacillota</taxon>
        <taxon>Clostridia</taxon>
        <taxon>Eubacteriales</taxon>
        <taxon>Clostridiaceae</taxon>
        <taxon>Clostridium</taxon>
    </lineage>
</organism>
<comment type="function">
    <text evidence="1">Forms part of the ribosomal stalk which helps the ribosome interact with GTP-bound translation factors.</text>
</comment>
<comment type="subunit">
    <text evidence="1">Part of the ribosomal stalk of the 50S ribosomal subunit. Interacts with L10 and the large rRNA to form the base of the stalk. L10 forms an elongated spine to which L12 dimers bind in a sequential fashion forming a multimeric L10(L12)X complex.</text>
</comment>
<comment type="PTM">
    <text evidence="1">One or more lysine residues are methylated.</text>
</comment>
<comment type="similarity">
    <text evidence="1">Belongs to the universal ribosomal protein uL11 family.</text>
</comment>
<dbReference type="EMBL" id="CP000727">
    <property type="protein sequence ID" value="ABS37172.1"/>
    <property type="molecule type" value="Genomic_DNA"/>
</dbReference>
<dbReference type="EMBL" id="AM412317">
    <property type="protein sequence ID" value="CAL85053.1"/>
    <property type="molecule type" value="Genomic_DNA"/>
</dbReference>
<dbReference type="RefSeq" id="WP_003357261.1">
    <property type="nucleotide sequence ID" value="NC_009698.1"/>
</dbReference>
<dbReference type="RefSeq" id="YP_001255974.1">
    <property type="nucleotide sequence ID" value="NC_009495.1"/>
</dbReference>
<dbReference type="RefSeq" id="YP_001389215.1">
    <property type="nucleotide sequence ID" value="NC_009698.1"/>
</dbReference>
<dbReference type="SMR" id="A5I7L8"/>
<dbReference type="GeneID" id="5186670"/>
<dbReference type="KEGG" id="cbh:CLC_3437"/>
<dbReference type="KEGG" id="cbo:CBO3492"/>
<dbReference type="PATRIC" id="fig|413999.7.peg.3469"/>
<dbReference type="HOGENOM" id="CLU_074237_2_1_9"/>
<dbReference type="PRO" id="PR:A5I7L8"/>
<dbReference type="Proteomes" id="UP000001986">
    <property type="component" value="Chromosome"/>
</dbReference>
<dbReference type="GO" id="GO:0022625">
    <property type="term" value="C:cytosolic large ribosomal subunit"/>
    <property type="evidence" value="ECO:0000318"/>
    <property type="project" value="GO_Central"/>
</dbReference>
<dbReference type="GO" id="GO:0070180">
    <property type="term" value="F:large ribosomal subunit rRNA binding"/>
    <property type="evidence" value="ECO:0000318"/>
    <property type="project" value="GO_Central"/>
</dbReference>
<dbReference type="GO" id="GO:0003735">
    <property type="term" value="F:structural constituent of ribosome"/>
    <property type="evidence" value="ECO:0000318"/>
    <property type="project" value="GO_Central"/>
</dbReference>
<dbReference type="GO" id="GO:0006412">
    <property type="term" value="P:translation"/>
    <property type="evidence" value="ECO:0000318"/>
    <property type="project" value="GO_Central"/>
</dbReference>
<dbReference type="CDD" id="cd00349">
    <property type="entry name" value="Ribosomal_L11"/>
    <property type="match status" value="1"/>
</dbReference>
<dbReference type="FunFam" id="1.10.10.250:FF:000001">
    <property type="entry name" value="50S ribosomal protein L11"/>
    <property type="match status" value="1"/>
</dbReference>
<dbReference type="FunFam" id="3.30.1550.10:FF:000001">
    <property type="entry name" value="50S ribosomal protein L11"/>
    <property type="match status" value="1"/>
</dbReference>
<dbReference type="Gene3D" id="1.10.10.250">
    <property type="entry name" value="Ribosomal protein L11, C-terminal domain"/>
    <property type="match status" value="1"/>
</dbReference>
<dbReference type="Gene3D" id="3.30.1550.10">
    <property type="entry name" value="Ribosomal protein L11/L12, N-terminal domain"/>
    <property type="match status" value="1"/>
</dbReference>
<dbReference type="HAMAP" id="MF_00736">
    <property type="entry name" value="Ribosomal_uL11"/>
    <property type="match status" value="1"/>
</dbReference>
<dbReference type="InterPro" id="IPR000911">
    <property type="entry name" value="Ribosomal_uL11"/>
</dbReference>
<dbReference type="InterPro" id="IPR006519">
    <property type="entry name" value="Ribosomal_uL11_bac-typ"/>
</dbReference>
<dbReference type="InterPro" id="IPR020783">
    <property type="entry name" value="Ribosomal_uL11_C"/>
</dbReference>
<dbReference type="InterPro" id="IPR036769">
    <property type="entry name" value="Ribosomal_uL11_C_sf"/>
</dbReference>
<dbReference type="InterPro" id="IPR020784">
    <property type="entry name" value="Ribosomal_uL11_N"/>
</dbReference>
<dbReference type="InterPro" id="IPR036796">
    <property type="entry name" value="Ribosomal_uL11_N_sf"/>
</dbReference>
<dbReference type="NCBIfam" id="TIGR01632">
    <property type="entry name" value="L11_bact"/>
    <property type="match status" value="1"/>
</dbReference>
<dbReference type="PANTHER" id="PTHR11661">
    <property type="entry name" value="60S RIBOSOMAL PROTEIN L12"/>
    <property type="match status" value="1"/>
</dbReference>
<dbReference type="PANTHER" id="PTHR11661:SF1">
    <property type="entry name" value="LARGE RIBOSOMAL SUBUNIT PROTEIN UL11M"/>
    <property type="match status" value="1"/>
</dbReference>
<dbReference type="Pfam" id="PF00298">
    <property type="entry name" value="Ribosomal_L11"/>
    <property type="match status" value="1"/>
</dbReference>
<dbReference type="Pfam" id="PF03946">
    <property type="entry name" value="Ribosomal_L11_N"/>
    <property type="match status" value="1"/>
</dbReference>
<dbReference type="SMART" id="SM00649">
    <property type="entry name" value="RL11"/>
    <property type="match status" value="1"/>
</dbReference>
<dbReference type="SUPFAM" id="SSF54747">
    <property type="entry name" value="Ribosomal L11/L12e N-terminal domain"/>
    <property type="match status" value="1"/>
</dbReference>
<dbReference type="SUPFAM" id="SSF46906">
    <property type="entry name" value="Ribosomal protein L11, C-terminal domain"/>
    <property type="match status" value="1"/>
</dbReference>
<evidence type="ECO:0000255" key="1">
    <source>
        <dbReference type="HAMAP-Rule" id="MF_00736"/>
    </source>
</evidence>
<evidence type="ECO:0000305" key="2"/>
<proteinExistence type="inferred from homology"/>
<protein>
    <recommendedName>
        <fullName evidence="1">Large ribosomal subunit protein uL11</fullName>
    </recommendedName>
    <alternativeName>
        <fullName evidence="2">50S ribosomal protein L11</fullName>
    </alternativeName>
</protein>
<sequence>MAKKVVGMIKLQLPAGKASPAPPVGPALGQHGVNIMGFCKEFNAKTANQAGLIIPVVITVYQDRSFSFILKTPPAAVLLKKAAGIESGSGVPNKTKVAKVTKDQIREIAETKMPDLNAGSIETAMSMIAGTARSMGITVEE</sequence>
<feature type="chain" id="PRO_1000046168" description="Large ribosomal subunit protein uL11">
    <location>
        <begin position="1"/>
        <end position="141"/>
    </location>
</feature>
<name>RL11_CLOBH</name>
<gene>
    <name evidence="1" type="primary">rplK</name>
    <name type="ordered locus">CBO3492</name>
    <name type="ordered locus">CLC_3437</name>
</gene>